<sequence length="614" mass="68530">MADSAVPCSLGPSTRASSTHRDATGTKQTRALKRGDASKRQAELEAAIQRKVEFERKAVRIVEQLLEENITEEFLKECGMFITPAHYSDVVDERSIIKLCGYPLCQKKLGVIPKQKYRISTKTNKVYDITERKSFCSNFCYRASKFFETQIPKTPVWVREEERPPDFQLLKKGQSGSSGEVVQFFRDAVTAADVDGSGALEAQCDPASSSSWSERASDEEEQGFVSSLLPGNRPKAVDTRPQPHTKSSIMRKKAAQNVDSKEGEQTVSEVTEQLDNCRLDSQEKVATCKRPLKKESTQISSPGPLCDRFNTSAISEHKHGVSQVTLVGISKKSAEHFRSKFAKSNPGSGSASGLVHVRPEVAKANLLRVLSDTLTEWKTEETLKFLYGQNHDSVCLKPSSASEPDEELDEDDISCDPGSCGPALSQAQNTLDATLPFRGSDTAIKPLPSYESLKKETEMLNLRVREFYRGRCVLNEDTTKSQDSKESVLQRDPSFPLIDSSSQNQIRRRIVLEKLSKVLPGLLGPLQITMGDIYTELKNLIQTFRLSNRNIIHKPVEWTLIAVVLLLLLTPILGIQKHSPKNVVFTQFIATLLTELHLKFEDLEKLTMIFRTSC</sequence>
<dbReference type="EC" id="3.1.3.16" evidence="10"/>
<dbReference type="EMBL" id="AK034418">
    <property type="protein sequence ID" value="BAC28703.1"/>
    <property type="molecule type" value="mRNA"/>
</dbReference>
<dbReference type="EMBL" id="AK049889">
    <property type="protein sequence ID" value="BAC33973.1"/>
    <property type="molecule type" value="mRNA"/>
</dbReference>
<dbReference type="EMBL" id="AK145830">
    <property type="protein sequence ID" value="BAE26681.1"/>
    <property type="molecule type" value="mRNA"/>
</dbReference>
<dbReference type="EMBL" id="AK161901">
    <property type="protein sequence ID" value="BAE36627.1"/>
    <property type="molecule type" value="mRNA"/>
</dbReference>
<dbReference type="EMBL" id="AK166574">
    <property type="protein sequence ID" value="BAE38864.1"/>
    <property type="molecule type" value="mRNA"/>
</dbReference>
<dbReference type="EMBL" id="BC021895">
    <property type="protein sequence ID" value="AAH21895.1"/>
    <property type="molecule type" value="mRNA"/>
</dbReference>
<dbReference type="CCDS" id="CCDS19506.1">
    <molecule id="Q8VC34-1"/>
</dbReference>
<dbReference type="CCDS" id="CCDS51588.1">
    <molecule id="Q8VC34-3"/>
</dbReference>
<dbReference type="CCDS" id="CCDS51589.1">
    <molecule id="Q8VC34-4"/>
</dbReference>
<dbReference type="CCDS" id="CCDS71630.1">
    <molecule id="Q8VC34-2"/>
</dbReference>
<dbReference type="CCDS" id="CCDS71631.1">
    <molecule id="Q8VC34-5"/>
</dbReference>
<dbReference type="RefSeq" id="NP_001156933.1">
    <molecule id="Q8VC34-3"/>
    <property type="nucleotide sequence ID" value="NM_001163461.2"/>
</dbReference>
<dbReference type="RefSeq" id="NP_001156934.1">
    <molecule id="Q8VC34-4"/>
    <property type="nucleotide sequence ID" value="NM_001163462.2"/>
</dbReference>
<dbReference type="RefSeq" id="NP_001276498.1">
    <molecule id="Q8VC34-5"/>
    <property type="nucleotide sequence ID" value="NM_001289569.1"/>
</dbReference>
<dbReference type="RefSeq" id="NP_001276499.1">
    <molecule id="Q8VC34-2"/>
    <property type="nucleotide sequence ID" value="NM_001289570.1"/>
</dbReference>
<dbReference type="RefSeq" id="NP_659160.2">
    <molecule id="Q8VC34-1"/>
    <property type="nucleotide sequence ID" value="NM_144911.3"/>
</dbReference>
<dbReference type="RefSeq" id="XP_006534963.1">
    <molecule id="Q8VC34-5"/>
    <property type="nucleotide sequence ID" value="XM_006534900.3"/>
</dbReference>
<dbReference type="RefSeq" id="XP_036020968.1">
    <molecule id="Q8VC34-5"/>
    <property type="nucleotide sequence ID" value="XM_036165075.1"/>
</dbReference>
<dbReference type="SMR" id="Q8VC34"/>
<dbReference type="FunCoup" id="Q8VC34">
    <property type="interactions" value="3665"/>
</dbReference>
<dbReference type="IntAct" id="Q8VC34">
    <property type="interactions" value="1"/>
</dbReference>
<dbReference type="MINT" id="Q8VC34"/>
<dbReference type="STRING" id="10090.ENSMUSP00000070209"/>
<dbReference type="GlyGen" id="Q8VC34">
    <property type="glycosylation" value="1 site, 1 O-linked glycan (1 site)"/>
</dbReference>
<dbReference type="iPTMnet" id="Q8VC34"/>
<dbReference type="PhosphoSitePlus" id="Q8VC34"/>
<dbReference type="PaxDb" id="10090-ENSMUSP00000070209"/>
<dbReference type="PeptideAtlas" id="Q8VC34"/>
<dbReference type="ProteomicsDB" id="300470">
    <molecule id="Q8VC34-1"/>
</dbReference>
<dbReference type="ProteomicsDB" id="300471">
    <molecule id="Q8VC34-2"/>
</dbReference>
<dbReference type="ProteomicsDB" id="300472">
    <molecule id="Q8VC34-3"/>
</dbReference>
<dbReference type="ProteomicsDB" id="300473">
    <molecule id="Q8VC34-4"/>
</dbReference>
<dbReference type="ProteomicsDB" id="300474">
    <molecule id="Q8VC34-5"/>
</dbReference>
<dbReference type="Pumba" id="Q8VC34"/>
<dbReference type="Antibodypedia" id="46923">
    <property type="antibodies" value="63 antibodies from 20 providers"/>
</dbReference>
<dbReference type="DNASU" id="231571"/>
<dbReference type="Ensembl" id="ENSMUST00000065422.12">
    <molecule id="Q8VC34-1"/>
    <property type="protein sequence ID" value="ENSMUSP00000070209.6"/>
    <property type="gene ID" value="ENSMUSG00000033773.15"/>
</dbReference>
<dbReference type="Ensembl" id="ENSMUST00000112650.8">
    <molecule id="Q8VC34-4"/>
    <property type="protein sequence ID" value="ENSMUSP00000108269.2"/>
    <property type="gene ID" value="ENSMUSG00000033773.15"/>
</dbReference>
<dbReference type="Ensembl" id="ENSMUST00000112651.8">
    <molecule id="Q8VC34-5"/>
    <property type="protein sequence ID" value="ENSMUSP00000108270.2"/>
    <property type="gene ID" value="ENSMUSG00000033773.15"/>
</dbReference>
<dbReference type="Ensembl" id="ENSMUST00000112654.8">
    <molecule id="Q8VC34-3"/>
    <property type="protein sequence ID" value="ENSMUSP00000108273.2"/>
    <property type="gene ID" value="ENSMUSG00000033773.15"/>
</dbReference>
<dbReference type="Ensembl" id="ENSMUST00000112655.8">
    <molecule id="Q8VC34-2"/>
    <property type="protein sequence ID" value="ENSMUSP00000108274.2"/>
    <property type="gene ID" value="ENSMUSG00000033773.15"/>
</dbReference>
<dbReference type="GeneID" id="231571"/>
<dbReference type="KEGG" id="mmu:231571"/>
<dbReference type="UCSC" id="uc008ymn.3">
    <molecule id="Q8VC34-1"/>
    <property type="organism name" value="mouse"/>
</dbReference>
<dbReference type="UCSC" id="uc008ymq.3">
    <molecule id="Q8VC34-5"/>
    <property type="organism name" value="mouse"/>
</dbReference>
<dbReference type="UCSC" id="uc033iky.1">
    <molecule id="Q8VC34-2"/>
    <property type="organism name" value="mouse"/>
</dbReference>
<dbReference type="AGR" id="MGI:2141142"/>
<dbReference type="CTD" id="79871"/>
<dbReference type="MGI" id="MGI:2141142">
    <property type="gene designation" value="Rpap2"/>
</dbReference>
<dbReference type="VEuPathDB" id="HostDB:ENSMUSG00000033773"/>
<dbReference type="eggNOG" id="KOG4780">
    <property type="taxonomic scope" value="Eukaryota"/>
</dbReference>
<dbReference type="GeneTree" id="ENSGT00390000017965"/>
<dbReference type="HOGENOM" id="CLU_019258_1_0_1"/>
<dbReference type="InParanoid" id="Q8VC34"/>
<dbReference type="OMA" id="YPICQNK"/>
<dbReference type="OrthoDB" id="2590500at2759"/>
<dbReference type="PhylomeDB" id="Q8VC34"/>
<dbReference type="TreeFam" id="TF331431"/>
<dbReference type="Reactome" id="R-MMU-6807505">
    <property type="pathway name" value="RNA polymerase II transcribes snRNA genes"/>
</dbReference>
<dbReference type="BioGRID-ORCS" id="231571">
    <property type="hits" value="22 hits in 82 CRISPR screens"/>
</dbReference>
<dbReference type="ChiTaRS" id="Rpap2">
    <property type="organism name" value="mouse"/>
</dbReference>
<dbReference type="PRO" id="PR:Q8VC34"/>
<dbReference type="Proteomes" id="UP000000589">
    <property type="component" value="Chromosome 5"/>
</dbReference>
<dbReference type="RNAct" id="Q8VC34">
    <property type="molecule type" value="protein"/>
</dbReference>
<dbReference type="Bgee" id="ENSMUSG00000033773">
    <property type="expression patterns" value="Expressed in animal zygote and 251 other cell types or tissues"/>
</dbReference>
<dbReference type="ExpressionAtlas" id="Q8VC34">
    <property type="expression patterns" value="baseline and differential"/>
</dbReference>
<dbReference type="GO" id="GO:0005929">
    <property type="term" value="C:cilium"/>
    <property type="evidence" value="ECO:0007669"/>
    <property type="project" value="Ensembl"/>
</dbReference>
<dbReference type="GO" id="GO:0005737">
    <property type="term" value="C:cytoplasm"/>
    <property type="evidence" value="ECO:0000250"/>
    <property type="project" value="UniProtKB"/>
</dbReference>
<dbReference type="GO" id="GO:0005829">
    <property type="term" value="C:cytosol"/>
    <property type="evidence" value="ECO:0007669"/>
    <property type="project" value="Ensembl"/>
</dbReference>
<dbReference type="GO" id="GO:0005730">
    <property type="term" value="C:nucleolus"/>
    <property type="evidence" value="ECO:0007669"/>
    <property type="project" value="Ensembl"/>
</dbReference>
<dbReference type="GO" id="GO:0005634">
    <property type="term" value="C:nucleus"/>
    <property type="evidence" value="ECO:0000250"/>
    <property type="project" value="UniProtKB"/>
</dbReference>
<dbReference type="GO" id="GO:0097550">
    <property type="term" value="C:transcription preinitiation complex"/>
    <property type="evidence" value="ECO:0000250"/>
    <property type="project" value="UniProtKB"/>
</dbReference>
<dbReference type="GO" id="GO:0004722">
    <property type="term" value="F:protein serine/threonine phosphatase activity"/>
    <property type="evidence" value="ECO:0000250"/>
    <property type="project" value="UniProtKB"/>
</dbReference>
<dbReference type="GO" id="GO:0043175">
    <property type="term" value="F:RNA polymerase core enzyme binding"/>
    <property type="evidence" value="ECO:0007669"/>
    <property type="project" value="InterPro"/>
</dbReference>
<dbReference type="GO" id="GO:0008420">
    <property type="term" value="F:RNA polymerase II CTD heptapeptide repeat phosphatase activity"/>
    <property type="evidence" value="ECO:0000250"/>
    <property type="project" value="UniProtKB"/>
</dbReference>
<dbReference type="GO" id="GO:0008270">
    <property type="term" value="F:zinc ion binding"/>
    <property type="evidence" value="ECO:0007669"/>
    <property type="project" value="UniProtKB-KW"/>
</dbReference>
<dbReference type="GO" id="GO:0036499">
    <property type="term" value="P:PERK-mediated unfolded protein response"/>
    <property type="evidence" value="ECO:0000250"/>
    <property type="project" value="UniProtKB"/>
</dbReference>
<dbReference type="GO" id="GO:0009301">
    <property type="term" value="P:snRNA transcription"/>
    <property type="evidence" value="ECO:0000250"/>
    <property type="project" value="UniProtKB"/>
</dbReference>
<dbReference type="FunFam" id="1.25.40.820:FF:000001">
    <property type="entry name" value="RNA polymerase II subunit B1 CTD phosphatase Rpap2"/>
    <property type="match status" value="1"/>
</dbReference>
<dbReference type="Gene3D" id="1.25.40.820">
    <property type="match status" value="1"/>
</dbReference>
<dbReference type="InterPro" id="IPR039693">
    <property type="entry name" value="Rtr1/RPAP2"/>
</dbReference>
<dbReference type="InterPro" id="IPR007308">
    <property type="entry name" value="Rtr1/RPAP2_dom"/>
</dbReference>
<dbReference type="InterPro" id="IPR038534">
    <property type="entry name" value="Rtr1/RPAP2_sf"/>
</dbReference>
<dbReference type="PANTHER" id="PTHR14732">
    <property type="entry name" value="RNA POLYMERASE II SUBUNIT B1 CTD PHOSPHATASE RPAP2-RELATED"/>
    <property type="match status" value="1"/>
</dbReference>
<dbReference type="PANTHER" id="PTHR14732:SF0">
    <property type="entry name" value="RNA POLYMERASE II SUBUNIT B1 CTD PHOSPHATASE RPAP2-RELATED"/>
    <property type="match status" value="1"/>
</dbReference>
<dbReference type="Pfam" id="PF04181">
    <property type="entry name" value="RPAP2_Rtr1"/>
    <property type="match status" value="1"/>
</dbReference>
<dbReference type="PROSITE" id="PS51479">
    <property type="entry name" value="ZF_RTR1"/>
    <property type="match status" value="1"/>
</dbReference>
<gene>
    <name type="primary">Rpap2</name>
</gene>
<keyword id="KW-0007">Acetylation</keyword>
<keyword id="KW-0025">Alternative splicing</keyword>
<keyword id="KW-0175">Coiled coil</keyword>
<keyword id="KW-0963">Cytoplasm</keyword>
<keyword id="KW-0378">Hydrolase</keyword>
<keyword id="KW-0479">Metal-binding</keyword>
<keyword id="KW-0539">Nucleus</keyword>
<keyword id="KW-0597">Phosphoprotein</keyword>
<keyword id="KW-0904">Protein phosphatase</keyword>
<keyword id="KW-1185">Reference proteome</keyword>
<keyword id="KW-0804">Transcription</keyword>
<keyword id="KW-0805">Transcription regulation</keyword>
<keyword id="KW-0862">Zinc</keyword>
<keyword id="KW-0863">Zinc-finger</keyword>
<evidence type="ECO:0000250" key="1"/>
<evidence type="ECO:0000250" key="2">
    <source>
        <dbReference type="UniProtKB" id="Q5I0E6"/>
    </source>
</evidence>
<evidence type="ECO:0000250" key="3">
    <source>
        <dbReference type="UniProtKB" id="Q8IXW5"/>
    </source>
</evidence>
<evidence type="ECO:0000255" key="4"/>
<evidence type="ECO:0000255" key="5">
    <source>
        <dbReference type="PROSITE-ProRule" id="PRU00812"/>
    </source>
</evidence>
<evidence type="ECO:0000256" key="6">
    <source>
        <dbReference type="SAM" id="MobiDB-lite"/>
    </source>
</evidence>
<evidence type="ECO:0000269" key="7">
    <source>
    </source>
</evidence>
<evidence type="ECO:0000303" key="8">
    <source>
    </source>
</evidence>
<evidence type="ECO:0000305" key="9"/>
<evidence type="ECO:0000305" key="10">
    <source>
    </source>
</evidence>
<protein>
    <recommendedName>
        <fullName>Putative RNA polymerase II subunit B1 CTD phosphatase Rpap2</fullName>
        <ecNumber evidence="10">3.1.3.16</ecNumber>
    </recommendedName>
    <alternativeName>
        <fullName>RNA polymerase II-associated protein 2</fullName>
    </alternativeName>
</protein>
<reference key="1">
    <citation type="journal article" date="2005" name="Science">
        <title>The transcriptional landscape of the mammalian genome.</title>
        <authorList>
            <person name="Carninci P."/>
            <person name="Kasukawa T."/>
            <person name="Katayama S."/>
            <person name="Gough J."/>
            <person name="Frith M.C."/>
            <person name="Maeda N."/>
            <person name="Oyama R."/>
            <person name="Ravasi T."/>
            <person name="Lenhard B."/>
            <person name="Wells C."/>
            <person name="Kodzius R."/>
            <person name="Shimokawa K."/>
            <person name="Bajic V.B."/>
            <person name="Brenner S.E."/>
            <person name="Batalov S."/>
            <person name="Forrest A.R."/>
            <person name="Zavolan M."/>
            <person name="Davis M.J."/>
            <person name="Wilming L.G."/>
            <person name="Aidinis V."/>
            <person name="Allen J.E."/>
            <person name="Ambesi-Impiombato A."/>
            <person name="Apweiler R."/>
            <person name="Aturaliya R.N."/>
            <person name="Bailey T.L."/>
            <person name="Bansal M."/>
            <person name="Baxter L."/>
            <person name="Beisel K.W."/>
            <person name="Bersano T."/>
            <person name="Bono H."/>
            <person name="Chalk A.M."/>
            <person name="Chiu K.P."/>
            <person name="Choudhary V."/>
            <person name="Christoffels A."/>
            <person name="Clutterbuck D.R."/>
            <person name="Crowe M.L."/>
            <person name="Dalla E."/>
            <person name="Dalrymple B.P."/>
            <person name="de Bono B."/>
            <person name="Della Gatta G."/>
            <person name="di Bernardo D."/>
            <person name="Down T."/>
            <person name="Engstrom P."/>
            <person name="Fagiolini M."/>
            <person name="Faulkner G."/>
            <person name="Fletcher C.F."/>
            <person name="Fukushima T."/>
            <person name="Furuno M."/>
            <person name="Futaki S."/>
            <person name="Gariboldi M."/>
            <person name="Georgii-Hemming P."/>
            <person name="Gingeras T.R."/>
            <person name="Gojobori T."/>
            <person name="Green R.E."/>
            <person name="Gustincich S."/>
            <person name="Harbers M."/>
            <person name="Hayashi Y."/>
            <person name="Hensch T.K."/>
            <person name="Hirokawa N."/>
            <person name="Hill D."/>
            <person name="Huminiecki L."/>
            <person name="Iacono M."/>
            <person name="Ikeo K."/>
            <person name="Iwama A."/>
            <person name="Ishikawa T."/>
            <person name="Jakt M."/>
            <person name="Kanapin A."/>
            <person name="Katoh M."/>
            <person name="Kawasawa Y."/>
            <person name="Kelso J."/>
            <person name="Kitamura H."/>
            <person name="Kitano H."/>
            <person name="Kollias G."/>
            <person name="Krishnan S.P."/>
            <person name="Kruger A."/>
            <person name="Kummerfeld S.K."/>
            <person name="Kurochkin I.V."/>
            <person name="Lareau L.F."/>
            <person name="Lazarevic D."/>
            <person name="Lipovich L."/>
            <person name="Liu J."/>
            <person name="Liuni S."/>
            <person name="McWilliam S."/>
            <person name="Madan Babu M."/>
            <person name="Madera M."/>
            <person name="Marchionni L."/>
            <person name="Matsuda H."/>
            <person name="Matsuzawa S."/>
            <person name="Miki H."/>
            <person name="Mignone F."/>
            <person name="Miyake S."/>
            <person name="Morris K."/>
            <person name="Mottagui-Tabar S."/>
            <person name="Mulder N."/>
            <person name="Nakano N."/>
            <person name="Nakauchi H."/>
            <person name="Ng P."/>
            <person name="Nilsson R."/>
            <person name="Nishiguchi S."/>
            <person name="Nishikawa S."/>
            <person name="Nori F."/>
            <person name="Ohara O."/>
            <person name="Okazaki Y."/>
            <person name="Orlando V."/>
            <person name="Pang K.C."/>
            <person name="Pavan W.J."/>
            <person name="Pavesi G."/>
            <person name="Pesole G."/>
            <person name="Petrovsky N."/>
            <person name="Piazza S."/>
            <person name="Reed J."/>
            <person name="Reid J.F."/>
            <person name="Ring B.Z."/>
            <person name="Ringwald M."/>
            <person name="Rost B."/>
            <person name="Ruan Y."/>
            <person name="Salzberg S.L."/>
            <person name="Sandelin A."/>
            <person name="Schneider C."/>
            <person name="Schoenbach C."/>
            <person name="Sekiguchi K."/>
            <person name="Semple C.A."/>
            <person name="Seno S."/>
            <person name="Sessa L."/>
            <person name="Sheng Y."/>
            <person name="Shibata Y."/>
            <person name="Shimada H."/>
            <person name="Shimada K."/>
            <person name="Silva D."/>
            <person name="Sinclair B."/>
            <person name="Sperling S."/>
            <person name="Stupka E."/>
            <person name="Sugiura K."/>
            <person name="Sultana R."/>
            <person name="Takenaka Y."/>
            <person name="Taki K."/>
            <person name="Tammoja K."/>
            <person name="Tan S.L."/>
            <person name="Tang S."/>
            <person name="Taylor M.S."/>
            <person name="Tegner J."/>
            <person name="Teichmann S.A."/>
            <person name="Ueda H.R."/>
            <person name="van Nimwegen E."/>
            <person name="Verardo R."/>
            <person name="Wei C.L."/>
            <person name="Yagi K."/>
            <person name="Yamanishi H."/>
            <person name="Zabarovsky E."/>
            <person name="Zhu S."/>
            <person name="Zimmer A."/>
            <person name="Hide W."/>
            <person name="Bult C."/>
            <person name="Grimmond S.M."/>
            <person name="Teasdale R.D."/>
            <person name="Liu E.T."/>
            <person name="Brusic V."/>
            <person name="Quackenbush J."/>
            <person name="Wahlestedt C."/>
            <person name="Mattick J.S."/>
            <person name="Hume D.A."/>
            <person name="Kai C."/>
            <person name="Sasaki D."/>
            <person name="Tomaru Y."/>
            <person name="Fukuda S."/>
            <person name="Kanamori-Katayama M."/>
            <person name="Suzuki M."/>
            <person name="Aoki J."/>
            <person name="Arakawa T."/>
            <person name="Iida J."/>
            <person name="Imamura K."/>
            <person name="Itoh M."/>
            <person name="Kato T."/>
            <person name="Kawaji H."/>
            <person name="Kawagashira N."/>
            <person name="Kawashima T."/>
            <person name="Kojima M."/>
            <person name="Kondo S."/>
            <person name="Konno H."/>
            <person name="Nakano K."/>
            <person name="Ninomiya N."/>
            <person name="Nishio T."/>
            <person name="Okada M."/>
            <person name="Plessy C."/>
            <person name="Shibata K."/>
            <person name="Shiraki T."/>
            <person name="Suzuki S."/>
            <person name="Tagami M."/>
            <person name="Waki K."/>
            <person name="Watahiki A."/>
            <person name="Okamura-Oho Y."/>
            <person name="Suzuki H."/>
            <person name="Kawai J."/>
            <person name="Hayashizaki Y."/>
        </authorList>
    </citation>
    <scope>NUCLEOTIDE SEQUENCE [LARGE SCALE MRNA] (ISOFORMS 1; 2; 3; 4 AND 5)</scope>
    <source>
        <strain>C57BL/6J</strain>
        <tissue>Diencephalon</tissue>
        <tissue>Hippocampus</tissue>
        <tissue>Medulla oblongata</tissue>
        <tissue>Placenta</tissue>
    </source>
</reference>
<reference key="2">
    <citation type="journal article" date="2004" name="Genome Res.">
        <title>The status, quality, and expansion of the NIH full-length cDNA project: the Mammalian Gene Collection (MGC).</title>
        <authorList>
            <consortium name="The MGC Project Team"/>
        </authorList>
    </citation>
    <scope>NUCLEOTIDE SEQUENCE [LARGE SCALE MRNA] (ISOFORM 1)</scope>
    <source>
        <strain>C57BL/6J</strain>
        <strain>FVB/N</strain>
        <tissue>Mammary tumor</tissue>
    </source>
</reference>
<reference key="3">
    <citation type="journal article" date="2022" name="Mol. Carcinog.">
        <title>TGFbeta1 regulates HRas-mediated activation of IRE1alpha through the PERK-RPAP2 axis in keratinocytes.</title>
        <authorList>
            <person name="Mogre S."/>
            <person name="Blazanin N."/>
            <person name="Walsh H."/>
            <person name="Ibinson J."/>
            <person name="Minnich C."/>
            <person name="Andrew Hu C.C."/>
            <person name="Glick A.B."/>
        </authorList>
    </citation>
    <scope>FUNCTION</scope>
    <scope>CATALYTIC ACTIVITY</scope>
</reference>
<feature type="initiator methionine" description="Removed" evidence="3">
    <location>
        <position position="1"/>
    </location>
</feature>
<feature type="chain" id="PRO_0000250649" description="Putative RNA polymerase II subunit B1 CTD phosphatase Rpap2">
    <location>
        <begin position="2"/>
        <end position="614"/>
    </location>
</feature>
<feature type="zinc finger region" description="RTR1-type" evidence="5">
    <location>
        <begin position="77"/>
        <end position="160"/>
    </location>
</feature>
<feature type="region of interest" description="Disordered" evidence="6">
    <location>
        <begin position="1"/>
        <end position="38"/>
    </location>
</feature>
<feature type="region of interest" description="Disordered" evidence="6">
    <location>
        <begin position="200"/>
        <end position="266"/>
    </location>
</feature>
<feature type="coiled-coil region" evidence="4">
    <location>
        <begin position="41"/>
        <end position="68"/>
    </location>
</feature>
<feature type="binding site" evidence="5">
    <location>
        <position position="100"/>
    </location>
    <ligand>
        <name>Zn(2+)</name>
        <dbReference type="ChEBI" id="CHEBI:29105"/>
    </ligand>
</feature>
<feature type="binding site" evidence="5">
    <location>
        <position position="105"/>
    </location>
    <ligand>
        <name>Zn(2+)</name>
        <dbReference type="ChEBI" id="CHEBI:29105"/>
    </ligand>
</feature>
<feature type="binding site" evidence="5">
    <location>
        <position position="136"/>
    </location>
    <ligand>
        <name>Zn(2+)</name>
        <dbReference type="ChEBI" id="CHEBI:29105"/>
    </ligand>
</feature>
<feature type="binding site" evidence="5">
    <location>
        <position position="140"/>
    </location>
    <ligand>
        <name>Zn(2+)</name>
        <dbReference type="ChEBI" id="CHEBI:29105"/>
    </ligand>
</feature>
<feature type="modified residue" description="N-acetylalanine" evidence="3">
    <location>
        <position position="2"/>
    </location>
</feature>
<feature type="modified residue" description="Phosphoserine" evidence="3">
    <location>
        <position position="9"/>
    </location>
</feature>
<feature type="modified residue" description="Phosphoserine" evidence="2">
    <location>
        <position position="217"/>
    </location>
</feature>
<feature type="modified residue" description="Phosphoserine" evidence="3">
    <location>
        <position position="481"/>
    </location>
</feature>
<feature type="splice variant" id="VSP_020682" description="In isoform 4." evidence="8">
    <location>
        <begin position="1"/>
        <end position="79"/>
    </location>
</feature>
<feature type="splice variant" id="VSP_020683" description="In isoform 5." evidence="8">
    <location>
        <begin position="1"/>
        <end position="77"/>
    </location>
</feature>
<feature type="splice variant" id="VSP_020684" description="In isoform 5." evidence="8">
    <original>C</original>
    <variation>M</variation>
    <location>
        <position position="78"/>
    </location>
</feature>
<feature type="splice variant" id="VSP_020685" description="In isoform 3 and isoform 4." evidence="8">
    <location>
        <begin position="569"/>
        <end position="614"/>
    </location>
</feature>
<feature type="splice variant" id="VSP_020686" description="In isoform 2." evidence="8">
    <original>LT</original>
    <variation>IL</variation>
    <location>
        <begin position="569"/>
        <end position="570"/>
    </location>
</feature>
<feature type="splice variant" id="VSP_020687" description="In isoform 2." evidence="8">
    <location>
        <begin position="571"/>
        <end position="614"/>
    </location>
</feature>
<feature type="sequence conflict" description="In Ref. 2; AAH21895." evidence="9" ref="2">
    <original>E</original>
    <variation>D</variation>
    <location>
        <position position="201"/>
    </location>
</feature>
<feature type="sequence conflict" description="In Ref. 2; AAH21895." evidence="9" ref="2">
    <original>K</original>
    <variation>T</variation>
    <location>
        <position position="318"/>
    </location>
</feature>
<feature type="sequence conflict" description="In Ref. 1; BAE26681." evidence="9" ref="1">
    <original>I</original>
    <variation>V</variation>
    <location>
        <position position="444"/>
    </location>
</feature>
<feature type="sequence conflict" description="In Ref. 1; BAE38864." evidence="9" ref="1">
    <original>G</original>
    <variation>V</variation>
    <location>
        <position position="524"/>
    </location>
</feature>
<organism>
    <name type="scientific">Mus musculus</name>
    <name type="common">Mouse</name>
    <dbReference type="NCBI Taxonomy" id="10090"/>
    <lineage>
        <taxon>Eukaryota</taxon>
        <taxon>Metazoa</taxon>
        <taxon>Chordata</taxon>
        <taxon>Craniata</taxon>
        <taxon>Vertebrata</taxon>
        <taxon>Euteleostomi</taxon>
        <taxon>Mammalia</taxon>
        <taxon>Eutheria</taxon>
        <taxon>Euarchontoglires</taxon>
        <taxon>Glires</taxon>
        <taxon>Rodentia</taxon>
        <taxon>Myomorpha</taxon>
        <taxon>Muroidea</taxon>
        <taxon>Muridae</taxon>
        <taxon>Murinae</taxon>
        <taxon>Mus</taxon>
        <taxon>Mus</taxon>
    </lineage>
</organism>
<comment type="function">
    <text evidence="3 7">Protein phosphatase that displays CTD phosphatase activity and regulates transcription of snRNA genes. Recognizes and binds phosphorylated 'Ser-7' of the C-terminal heptapeptide repeat domain (CTD) of the largest RNA polymerase II subunit POLR2A, and mediates dephosphorylation of 'Ser-5' of the CTD, thereby promoting transcription of snRNA genes (By similarity). Downstream of EIF2AK3/PERK, dephosphorylates ERN1, a sensor for the endoplasmic reticulum unfolded protein response (UPR), to abort failed ER-stress adaptation and trigger apoptosis (PubMed:35975910).</text>
</comment>
<comment type="catalytic activity">
    <reaction evidence="10">
        <text>O-phospho-L-seryl-[protein] + H2O = L-seryl-[protein] + phosphate</text>
        <dbReference type="Rhea" id="RHEA:20629"/>
        <dbReference type="Rhea" id="RHEA-COMP:9863"/>
        <dbReference type="Rhea" id="RHEA-COMP:11604"/>
        <dbReference type="ChEBI" id="CHEBI:15377"/>
        <dbReference type="ChEBI" id="CHEBI:29999"/>
        <dbReference type="ChEBI" id="CHEBI:43474"/>
        <dbReference type="ChEBI" id="CHEBI:83421"/>
        <dbReference type="EC" id="3.1.3.16"/>
    </reaction>
</comment>
<comment type="catalytic activity">
    <reaction>
        <text>O-phospho-L-threonyl-[protein] + H2O = L-threonyl-[protein] + phosphate</text>
        <dbReference type="Rhea" id="RHEA:47004"/>
        <dbReference type="Rhea" id="RHEA-COMP:11060"/>
        <dbReference type="Rhea" id="RHEA-COMP:11605"/>
        <dbReference type="ChEBI" id="CHEBI:15377"/>
        <dbReference type="ChEBI" id="CHEBI:30013"/>
        <dbReference type="ChEBI" id="CHEBI:43474"/>
        <dbReference type="ChEBI" id="CHEBI:61977"/>
        <dbReference type="EC" id="3.1.3.16"/>
    </reaction>
</comment>
<comment type="subunit">
    <text evidence="1">Associates with the RNA polymerase II complex. Interacts with transcribing RNA polymerase II phosphorylated on 'Ser-7' on CTD (By similarity).</text>
</comment>
<comment type="subcellular location">
    <subcellularLocation>
        <location evidence="1">Cytoplasm</location>
    </subcellularLocation>
    <subcellularLocation>
        <location evidence="1">Nucleus</location>
    </subcellularLocation>
    <text evidence="1">Shuttles between the cytoplasm and the nucleus in a CRM1-dependent manner.</text>
</comment>
<comment type="alternative products">
    <event type="alternative splicing"/>
    <isoform>
        <id>Q8VC34-1</id>
        <name>1</name>
        <sequence type="displayed"/>
    </isoform>
    <isoform>
        <id>Q8VC34-2</id>
        <name>2</name>
        <sequence type="described" ref="VSP_020686 VSP_020687"/>
    </isoform>
    <isoform>
        <id>Q8VC34-3</id>
        <name>3</name>
        <sequence type="described" ref="VSP_020685"/>
    </isoform>
    <isoform>
        <id>Q8VC34-4</id>
        <name>4</name>
        <sequence type="described" ref="VSP_020682 VSP_020685"/>
    </isoform>
    <isoform>
        <id>Q8VC34-5</id>
        <name>5</name>
        <sequence type="described" ref="VSP_020683 VSP_020684"/>
    </isoform>
</comment>
<comment type="similarity">
    <text evidence="5 9">Belongs to the RPAP2 family.</text>
</comment>
<proteinExistence type="evidence at protein level"/>
<name>RPAP2_MOUSE</name>
<accession>Q8VC34</accession>
<accession>Q3TLC8</accession>
<accession>Q3TSP8</accession>
<accession>Q3UKX0</accession>
<accession>Q8C7M5</accession>
<accession>Q8CBW8</accession>